<protein>
    <recommendedName>
        <fullName evidence="1">Gamma-glutamyl phosphate reductase</fullName>
        <shortName evidence="1">GPR</shortName>
        <ecNumber evidence="1">1.2.1.41</ecNumber>
    </recommendedName>
    <alternativeName>
        <fullName evidence="1">Glutamate-5-semialdehyde dehydrogenase</fullName>
    </alternativeName>
    <alternativeName>
        <fullName evidence="1">Glutamyl-gamma-semialdehyde dehydrogenase</fullName>
        <shortName evidence="1">GSA dehydrogenase</shortName>
    </alternativeName>
</protein>
<proteinExistence type="inferred from homology"/>
<feature type="chain" id="PRO_1000205991" description="Gamma-glutamyl phosphate reductase">
    <location>
        <begin position="1"/>
        <end position="419"/>
    </location>
</feature>
<name>PROA_MARSD</name>
<dbReference type="EC" id="1.2.1.41" evidence="1"/>
<dbReference type="EMBL" id="CP001649">
    <property type="protein sequence ID" value="ACS79597.1"/>
    <property type="molecule type" value="Genomic_DNA"/>
</dbReference>
<dbReference type="RefSeq" id="WP_015851415.1">
    <property type="nucleotide sequence ID" value="NC_012881.1"/>
</dbReference>
<dbReference type="SMR" id="C6BSC1"/>
<dbReference type="STRING" id="526222.Desal_1535"/>
<dbReference type="KEGG" id="dsa:Desal_1535"/>
<dbReference type="eggNOG" id="COG0014">
    <property type="taxonomic scope" value="Bacteria"/>
</dbReference>
<dbReference type="HOGENOM" id="CLU_030231_0_0_7"/>
<dbReference type="OrthoDB" id="9809970at2"/>
<dbReference type="UniPathway" id="UPA00098">
    <property type="reaction ID" value="UER00360"/>
</dbReference>
<dbReference type="Proteomes" id="UP000002601">
    <property type="component" value="Chromosome"/>
</dbReference>
<dbReference type="GO" id="GO:0005737">
    <property type="term" value="C:cytoplasm"/>
    <property type="evidence" value="ECO:0007669"/>
    <property type="project" value="UniProtKB-SubCell"/>
</dbReference>
<dbReference type="GO" id="GO:0004350">
    <property type="term" value="F:glutamate-5-semialdehyde dehydrogenase activity"/>
    <property type="evidence" value="ECO:0007669"/>
    <property type="project" value="UniProtKB-UniRule"/>
</dbReference>
<dbReference type="GO" id="GO:0050661">
    <property type="term" value="F:NADP binding"/>
    <property type="evidence" value="ECO:0007669"/>
    <property type="project" value="InterPro"/>
</dbReference>
<dbReference type="GO" id="GO:0055129">
    <property type="term" value="P:L-proline biosynthetic process"/>
    <property type="evidence" value="ECO:0007669"/>
    <property type="project" value="UniProtKB-UniRule"/>
</dbReference>
<dbReference type="CDD" id="cd07079">
    <property type="entry name" value="ALDH_F18-19_ProA-GPR"/>
    <property type="match status" value="1"/>
</dbReference>
<dbReference type="FunFam" id="3.40.309.10:FF:000006">
    <property type="entry name" value="Gamma-glutamyl phosphate reductase"/>
    <property type="match status" value="1"/>
</dbReference>
<dbReference type="Gene3D" id="3.40.605.10">
    <property type="entry name" value="Aldehyde Dehydrogenase, Chain A, domain 1"/>
    <property type="match status" value="1"/>
</dbReference>
<dbReference type="Gene3D" id="3.40.309.10">
    <property type="entry name" value="Aldehyde Dehydrogenase, Chain A, domain 2"/>
    <property type="match status" value="1"/>
</dbReference>
<dbReference type="HAMAP" id="MF_00412">
    <property type="entry name" value="ProA"/>
    <property type="match status" value="1"/>
</dbReference>
<dbReference type="InterPro" id="IPR016161">
    <property type="entry name" value="Ald_DH/histidinol_DH"/>
</dbReference>
<dbReference type="InterPro" id="IPR016163">
    <property type="entry name" value="Ald_DH_C"/>
</dbReference>
<dbReference type="InterPro" id="IPR016162">
    <property type="entry name" value="Ald_DH_N"/>
</dbReference>
<dbReference type="InterPro" id="IPR015590">
    <property type="entry name" value="Aldehyde_DH_dom"/>
</dbReference>
<dbReference type="InterPro" id="IPR012134">
    <property type="entry name" value="Glu-5-SA_DH"/>
</dbReference>
<dbReference type="InterPro" id="IPR000965">
    <property type="entry name" value="GPR_dom"/>
</dbReference>
<dbReference type="NCBIfam" id="NF001221">
    <property type="entry name" value="PRK00197.1"/>
    <property type="match status" value="1"/>
</dbReference>
<dbReference type="NCBIfam" id="TIGR00407">
    <property type="entry name" value="proA"/>
    <property type="match status" value="1"/>
</dbReference>
<dbReference type="PANTHER" id="PTHR11063:SF8">
    <property type="entry name" value="DELTA-1-PYRROLINE-5-CARBOXYLATE SYNTHASE"/>
    <property type="match status" value="1"/>
</dbReference>
<dbReference type="PANTHER" id="PTHR11063">
    <property type="entry name" value="GLUTAMATE SEMIALDEHYDE DEHYDROGENASE"/>
    <property type="match status" value="1"/>
</dbReference>
<dbReference type="Pfam" id="PF00171">
    <property type="entry name" value="Aldedh"/>
    <property type="match status" value="1"/>
</dbReference>
<dbReference type="PIRSF" id="PIRSF000151">
    <property type="entry name" value="GPR"/>
    <property type="match status" value="1"/>
</dbReference>
<dbReference type="SUPFAM" id="SSF53720">
    <property type="entry name" value="ALDH-like"/>
    <property type="match status" value="1"/>
</dbReference>
<comment type="function">
    <text evidence="1">Catalyzes the NADPH-dependent reduction of L-glutamate 5-phosphate into L-glutamate 5-semialdehyde and phosphate. The product spontaneously undergoes cyclization to form 1-pyrroline-5-carboxylate.</text>
</comment>
<comment type="catalytic activity">
    <reaction evidence="1">
        <text>L-glutamate 5-semialdehyde + phosphate + NADP(+) = L-glutamyl 5-phosphate + NADPH + H(+)</text>
        <dbReference type="Rhea" id="RHEA:19541"/>
        <dbReference type="ChEBI" id="CHEBI:15378"/>
        <dbReference type="ChEBI" id="CHEBI:43474"/>
        <dbReference type="ChEBI" id="CHEBI:57783"/>
        <dbReference type="ChEBI" id="CHEBI:58066"/>
        <dbReference type="ChEBI" id="CHEBI:58274"/>
        <dbReference type="ChEBI" id="CHEBI:58349"/>
        <dbReference type="EC" id="1.2.1.41"/>
    </reaction>
</comment>
<comment type="pathway">
    <text evidence="1">Amino-acid biosynthesis; L-proline biosynthesis; L-glutamate 5-semialdehyde from L-glutamate: step 2/2.</text>
</comment>
<comment type="subcellular location">
    <subcellularLocation>
        <location evidence="1">Cytoplasm</location>
    </subcellularLocation>
</comment>
<comment type="similarity">
    <text evidence="1">Belongs to the gamma-glutamyl phosphate reductase family.</text>
</comment>
<gene>
    <name evidence="1" type="primary">proA</name>
    <name type="ordered locus">Desal_1535</name>
</gene>
<reference key="1">
    <citation type="submission" date="2009-06" db="EMBL/GenBank/DDBJ databases">
        <title>Complete sequence of Desulfovibrio salexigens DSM 2638.</title>
        <authorList>
            <consortium name="US DOE Joint Genome Institute"/>
            <person name="Lucas S."/>
            <person name="Copeland A."/>
            <person name="Lapidus A."/>
            <person name="Glavina del Rio T."/>
            <person name="Tice H."/>
            <person name="Bruce D."/>
            <person name="Goodwin L."/>
            <person name="Pitluck S."/>
            <person name="Munk A.C."/>
            <person name="Brettin T."/>
            <person name="Detter J.C."/>
            <person name="Han C."/>
            <person name="Tapia R."/>
            <person name="Larimer F."/>
            <person name="Land M."/>
            <person name="Hauser L."/>
            <person name="Kyrpides N."/>
            <person name="Anderson I."/>
            <person name="Wall J.D."/>
            <person name="Arkin A.P."/>
            <person name="Dehal P."/>
            <person name="Chivian D."/>
            <person name="Giles B."/>
            <person name="Hazen T.C."/>
        </authorList>
    </citation>
    <scope>NUCLEOTIDE SEQUENCE [LARGE SCALE GENOMIC DNA]</scope>
    <source>
        <strain>ATCC 14822 / DSM 2638 / NCIMB 8403 / VKM B-1763</strain>
    </source>
</reference>
<accession>C6BSC1</accession>
<sequence>MSHSEAMKAVAVKAKEASRKIACADGTARNAAIIELAALLEQEKEFIFAENKKDLDAAKERGLDQARLQRLEITPSVLEYMIQGCNEVAGQADPVGEIEKMERRPNGMMVGKMRIPLGVIMMIFESRPNVTVDAAVLCLKAGNSVILRGGSEAIHSNLALASLLQKALGKADLPAEAVQVVEVTDREAVGELLKLDEYIDVVIPRGGEGLIRAVVSQATMPVLKHYKGVCHMYVDSDCEIPEAMDIIKNAKTQKPAACNSLECLLVHEDIAKEILPSLGVLLGACGVTMKGCPRAMPLLGPKAIAADFDDWGMEYLDLILCVKVVSTQDEAQDHISRYGSNHSEVILTKNHDRAMRFIREVDASMVGVNASTRFNDGGQLGLGAEIGISTSKLHSYGPMGATELTSTKFVLLGNWDVRN</sequence>
<keyword id="KW-0028">Amino-acid biosynthesis</keyword>
<keyword id="KW-0963">Cytoplasm</keyword>
<keyword id="KW-0521">NADP</keyword>
<keyword id="KW-0560">Oxidoreductase</keyword>
<keyword id="KW-0641">Proline biosynthesis</keyword>
<keyword id="KW-1185">Reference proteome</keyword>
<evidence type="ECO:0000255" key="1">
    <source>
        <dbReference type="HAMAP-Rule" id="MF_00412"/>
    </source>
</evidence>
<organism>
    <name type="scientific">Maridesulfovibrio salexigens (strain ATCC 14822 / DSM 2638 / NCIMB 8403 / VKM B-1763)</name>
    <name type="common">Desulfovibrio salexigens</name>
    <dbReference type="NCBI Taxonomy" id="526222"/>
    <lineage>
        <taxon>Bacteria</taxon>
        <taxon>Pseudomonadati</taxon>
        <taxon>Thermodesulfobacteriota</taxon>
        <taxon>Desulfovibrionia</taxon>
        <taxon>Desulfovibrionales</taxon>
        <taxon>Desulfovibrionaceae</taxon>
        <taxon>Maridesulfovibrio</taxon>
    </lineage>
</organism>